<sequence>MSNPNEPARALLPYLQRADELQKHEPLVAYYCRLYAMERGLKIPQSERTKTTNSILMSLINQLEKDKKSLTLSPDDNMHVEGFALSVFAKADKQDRAGRADLGTAKTFYAASIFFEILSQFGPVPPDIEQKHKYAAWKAADIRKAIKEGRKPTPGDPVDDDTDLSIPSSGPSGSYDHSASDTNTTSHHRTELDPPHDSNDDSSHHQFPEVPQHPLPPRFYDNPTNDYPADVPPPPPSSYPSNDHLPPPTGPSDSPYPHPYSHQPYHQDPPKHMPPPQNYSSHEPSPNSLPNFQSYPSFSESSLPSTSPHYPSHYQNPEPYYSSPHSAPAPSSTSFSSAPPPPPYSSNGRINIAPVLDPAPSSAQKYHYDSSYQPGPEKVAEALKAARFAVGALAFDEVSTAVEHLKKSLELLTNPSAGAGH</sequence>
<dbReference type="EMBL" id="AL035440">
    <property type="protein sequence ID" value="CAB36521.1"/>
    <property type="molecule type" value="Genomic_DNA"/>
</dbReference>
<dbReference type="EMBL" id="AL161565">
    <property type="protein sequence ID" value="CAB79530.1"/>
    <property type="molecule type" value="Genomic_DNA"/>
</dbReference>
<dbReference type="EMBL" id="CP002687">
    <property type="protein sequence ID" value="AEE85248.1"/>
    <property type="molecule type" value="Genomic_DNA"/>
</dbReference>
<dbReference type="EMBL" id="AY048219">
    <property type="protein sequence ID" value="AAK82482.1"/>
    <property type="molecule type" value="mRNA"/>
</dbReference>
<dbReference type="EMBL" id="AY094009">
    <property type="protein sequence ID" value="AAM16165.1"/>
    <property type="molecule type" value="mRNA"/>
</dbReference>
<dbReference type="PIR" id="T04798">
    <property type="entry name" value="T04798"/>
</dbReference>
<dbReference type="RefSeq" id="NP_194405.1">
    <property type="nucleotide sequence ID" value="NM_118809.5"/>
</dbReference>
<dbReference type="SMR" id="Q9SZ15"/>
<dbReference type="FunCoup" id="Q9SZ15">
    <property type="interactions" value="3843"/>
</dbReference>
<dbReference type="IntAct" id="Q9SZ15">
    <property type="interactions" value="3"/>
</dbReference>
<dbReference type="STRING" id="3702.Q9SZ15"/>
<dbReference type="TCDB" id="3.A.31.1.2">
    <property type="family name" value="the endosomal sorting complexes required for transport iii (escrt-iii) family"/>
</dbReference>
<dbReference type="GlyGen" id="Q9SZ15">
    <property type="glycosylation" value="1 site"/>
</dbReference>
<dbReference type="iPTMnet" id="Q9SZ15"/>
<dbReference type="PaxDb" id="3702-AT4G26750.1"/>
<dbReference type="ProteomicsDB" id="238418"/>
<dbReference type="EnsemblPlants" id="AT4G26750.1">
    <property type="protein sequence ID" value="AT4G26750.1"/>
    <property type="gene ID" value="AT4G26750"/>
</dbReference>
<dbReference type="GeneID" id="828782"/>
<dbReference type="Gramene" id="AT4G26750.1">
    <property type="protein sequence ID" value="AT4G26750.1"/>
    <property type="gene ID" value="AT4G26750"/>
</dbReference>
<dbReference type="KEGG" id="ath:AT4G26750"/>
<dbReference type="Araport" id="AT4G26750"/>
<dbReference type="TAIR" id="AT4G26750">
    <property type="gene designation" value="EXT-LIKE"/>
</dbReference>
<dbReference type="eggNOG" id="KOG0917">
    <property type="taxonomic scope" value="Eukaryota"/>
</dbReference>
<dbReference type="HOGENOM" id="CLU_035765_0_0_1"/>
<dbReference type="InParanoid" id="Q9SZ15"/>
<dbReference type="OMA" id="VSAQTHF"/>
<dbReference type="PhylomeDB" id="Q9SZ15"/>
<dbReference type="PRO" id="PR:Q9SZ15"/>
<dbReference type="Proteomes" id="UP000006548">
    <property type="component" value="Chromosome 4"/>
</dbReference>
<dbReference type="ExpressionAtlas" id="Q9SZ15">
    <property type="expression patterns" value="baseline and differential"/>
</dbReference>
<dbReference type="GO" id="GO:0005737">
    <property type="term" value="C:cytoplasm"/>
    <property type="evidence" value="ECO:0000314"/>
    <property type="project" value="UniProtKB"/>
</dbReference>
<dbReference type="GO" id="GO:0010008">
    <property type="term" value="C:endosome membrane"/>
    <property type="evidence" value="ECO:0007669"/>
    <property type="project" value="UniProtKB-SubCell"/>
</dbReference>
<dbReference type="GO" id="GO:0005771">
    <property type="term" value="C:multivesicular body"/>
    <property type="evidence" value="ECO:0000314"/>
    <property type="project" value="UniProtKB"/>
</dbReference>
<dbReference type="GO" id="GO:0005634">
    <property type="term" value="C:nucleus"/>
    <property type="evidence" value="ECO:0000314"/>
    <property type="project" value="UniProtKB"/>
</dbReference>
<dbReference type="GO" id="GO:0042803">
    <property type="term" value="F:protein homodimerization activity"/>
    <property type="evidence" value="ECO:0000314"/>
    <property type="project" value="UniProtKB"/>
</dbReference>
<dbReference type="GO" id="GO:0098542">
    <property type="term" value="P:defense response to other organism"/>
    <property type="evidence" value="ECO:0000315"/>
    <property type="project" value="UniProtKB"/>
</dbReference>
<dbReference type="GO" id="GO:0032511">
    <property type="term" value="P:late endosome to vacuole transport via multivesicular body sorting pathway"/>
    <property type="evidence" value="ECO:0007669"/>
    <property type="project" value="InterPro"/>
</dbReference>
<dbReference type="GO" id="GO:0080001">
    <property type="term" value="P:mucilage extrusion from seed coat"/>
    <property type="evidence" value="ECO:0000315"/>
    <property type="project" value="TAIR"/>
</dbReference>
<dbReference type="GO" id="GO:1900426">
    <property type="term" value="P:positive regulation of defense response to bacterium"/>
    <property type="evidence" value="ECO:0000315"/>
    <property type="project" value="TAIR"/>
</dbReference>
<dbReference type="GO" id="GO:0015031">
    <property type="term" value="P:protein transport"/>
    <property type="evidence" value="ECO:0007669"/>
    <property type="project" value="UniProtKB-KW"/>
</dbReference>
<dbReference type="GO" id="GO:1903335">
    <property type="term" value="P:regulation of vacuolar transport"/>
    <property type="evidence" value="ECO:0000316"/>
    <property type="project" value="TAIR"/>
</dbReference>
<dbReference type="GO" id="GO:0016192">
    <property type="term" value="P:vesicle-mediated transport"/>
    <property type="evidence" value="ECO:0000353"/>
    <property type="project" value="TAIR"/>
</dbReference>
<dbReference type="Gene3D" id="1.20.5.420">
    <property type="entry name" value="Immunoglobulin FC, subunit C"/>
    <property type="match status" value="1"/>
</dbReference>
<dbReference type="Gene3D" id="1.25.40.270">
    <property type="entry name" value="Vacuolar protein sorting-associated protein vta1"/>
    <property type="match status" value="1"/>
</dbReference>
<dbReference type="InterPro" id="IPR044538">
    <property type="entry name" value="Vta1-like"/>
</dbReference>
<dbReference type="InterPro" id="IPR039431">
    <property type="entry name" value="Vta1/CALS_N"/>
</dbReference>
<dbReference type="InterPro" id="IPR023175">
    <property type="entry name" value="Vta1/CALS_N_sf"/>
</dbReference>
<dbReference type="InterPro" id="IPR041212">
    <property type="entry name" value="Vta1_C"/>
</dbReference>
<dbReference type="PANTHER" id="PTHR46009">
    <property type="entry name" value="VACUOLAR PROTEIN SORTING-ASSOCIATED PROTEIN VTA1 HOMOLOG"/>
    <property type="match status" value="1"/>
</dbReference>
<dbReference type="PANTHER" id="PTHR46009:SF1">
    <property type="entry name" value="VACUOLAR PROTEIN SORTING-ASSOCIATED PROTEIN VTA1 HOMOLOG"/>
    <property type="match status" value="1"/>
</dbReference>
<dbReference type="Pfam" id="PF04652">
    <property type="entry name" value="Vta1"/>
    <property type="match status" value="1"/>
</dbReference>
<dbReference type="Pfam" id="PF18097">
    <property type="entry name" value="Vta1_C"/>
    <property type="match status" value="1"/>
</dbReference>
<gene>
    <name evidence="9" type="primary">LIP5</name>
    <name evidence="10" type="synonym">VTA1</name>
    <name evidence="12" type="ordered locus">At4g26750</name>
    <name evidence="13" type="ORF">F10M23.90</name>
</gene>
<protein>
    <recommendedName>
        <fullName evidence="9">Protein HOMOLOG OF MAMMALIAN LYST-INTERACTING PROTEIN 5</fullName>
    </recommendedName>
    <alternativeName>
        <fullName>Protein EXTENSIN-LIKE</fullName>
        <shortName>EXT-LIKE</shortName>
    </alternativeName>
</protein>
<proteinExistence type="evidence at protein level"/>
<feature type="initiator methionine" description="Removed" evidence="15">
    <location>
        <position position="1"/>
    </location>
</feature>
<feature type="chain" id="PRO_0000431529" description="Protein HOMOLOG OF MAMMALIAN LYST-INTERACTING PROTEIN 5">
    <location>
        <begin position="2"/>
        <end position="421"/>
    </location>
</feature>
<feature type="region of interest" description="Disordered" evidence="3">
    <location>
        <begin position="146"/>
        <end position="374"/>
    </location>
</feature>
<feature type="compositionally biased region" description="Polar residues" evidence="3">
    <location>
        <begin position="165"/>
        <end position="185"/>
    </location>
</feature>
<feature type="compositionally biased region" description="Basic and acidic residues" evidence="3">
    <location>
        <begin position="188"/>
        <end position="207"/>
    </location>
</feature>
<feature type="compositionally biased region" description="Pro residues" evidence="3">
    <location>
        <begin position="245"/>
        <end position="258"/>
    </location>
</feature>
<feature type="compositionally biased region" description="Polar residues" evidence="3">
    <location>
        <begin position="278"/>
        <end position="293"/>
    </location>
</feature>
<feature type="compositionally biased region" description="Low complexity" evidence="3">
    <location>
        <begin position="294"/>
        <end position="308"/>
    </location>
</feature>
<feature type="compositionally biased region" description="Low complexity" evidence="3">
    <location>
        <begin position="317"/>
        <end position="337"/>
    </location>
</feature>
<feature type="modified residue" description="N-acetylserine" evidence="15">
    <location>
        <position position="2"/>
    </location>
</feature>
<feature type="mutagenesis site" description="Loss of MK3/MK6-mediated phosphorylation; when associated with A-153; A-254; A-285; A-307 and A-323." evidence="8">
    <original>S</original>
    <variation>A</variation>
    <location>
        <position position="73"/>
    </location>
</feature>
<feature type="mutagenesis site" description="Loss of MK3/MK6-mediated phosphorylation; when associated with A-73; A-254; A-285; A-307 and A-323." evidence="8">
    <original>T</original>
    <variation>A</variation>
    <location>
        <position position="153"/>
    </location>
</feature>
<feature type="mutagenesis site" description="Loss of MK3/MK6-mediated phosphorylation; when associated with A-73; A-153; A-285; A-307 and A-323." evidence="8">
    <original>S</original>
    <variation>A</variation>
    <location>
        <position position="254"/>
    </location>
</feature>
<feature type="mutagenesis site" description="Loss of MK3/MK6-mediated phosphorylation; when associated with A-73; A-153; A-254; A-307 and A-323." evidence="8">
    <original>S</original>
    <variation>A</variation>
    <location>
        <position position="285"/>
    </location>
</feature>
<feature type="mutagenesis site" description="Loss of MK3/MK6-mediated phosphorylation; when associated with A-73; A-153; A-254; A-285 and A-323." evidence="8">
    <original>S</original>
    <variation>A</variation>
    <location>
        <position position="307"/>
    </location>
</feature>
<feature type="mutagenesis site" description="Loss of MK3/MK6-mediated phosphorylation; when associated with A-73; A-153; A-254; A-285 and A-307." evidence="8">
    <original>S</original>
    <variation>A</variation>
    <location>
        <position position="323"/>
    </location>
</feature>
<feature type="mutagenesis site" description="Reduced SKD1 interaction." evidence="8">
    <original>F</original>
    <variation>A</variation>
    <location>
        <position position="388"/>
    </location>
</feature>
<feature type="mutagenesis site" description="Loss of SKD1 interaction." evidence="8">
    <original>F</original>
    <variation>A</variation>
    <location>
        <position position="395"/>
    </location>
</feature>
<accession>Q9SZ15</accession>
<evidence type="ECO:0000250" key="1"/>
<evidence type="ECO:0000250" key="2">
    <source>
        <dbReference type="UniProtKB" id="Q9NP79"/>
    </source>
</evidence>
<evidence type="ECO:0000256" key="3">
    <source>
        <dbReference type="SAM" id="MobiDB-lite"/>
    </source>
</evidence>
<evidence type="ECO:0000269" key="4">
    <source>
    </source>
</evidence>
<evidence type="ECO:0000269" key="5">
    <source>
    </source>
</evidence>
<evidence type="ECO:0000269" key="6">
    <source>
    </source>
</evidence>
<evidence type="ECO:0000269" key="7">
    <source>
    </source>
</evidence>
<evidence type="ECO:0000269" key="8">
    <source>
    </source>
</evidence>
<evidence type="ECO:0000303" key="9">
    <source>
    </source>
</evidence>
<evidence type="ECO:0000303" key="10">
    <source>
    </source>
</evidence>
<evidence type="ECO:0000305" key="11"/>
<evidence type="ECO:0000312" key="12">
    <source>
        <dbReference type="Araport" id="AT4G26750"/>
    </source>
</evidence>
<evidence type="ECO:0000312" key="13">
    <source>
        <dbReference type="EMBL" id="CAB36521.1"/>
    </source>
</evidence>
<evidence type="ECO:0000312" key="14">
    <source>
        <dbReference type="Proteomes" id="UP000006548"/>
    </source>
</evidence>
<evidence type="ECO:0007744" key="15">
    <source>
    </source>
</evidence>
<organism evidence="14">
    <name type="scientific">Arabidopsis thaliana</name>
    <name type="common">Mouse-ear cress</name>
    <dbReference type="NCBI Taxonomy" id="3702"/>
    <lineage>
        <taxon>Eukaryota</taxon>
        <taxon>Viridiplantae</taxon>
        <taxon>Streptophyta</taxon>
        <taxon>Embryophyta</taxon>
        <taxon>Tracheophyta</taxon>
        <taxon>Spermatophyta</taxon>
        <taxon>Magnoliopsida</taxon>
        <taxon>eudicotyledons</taxon>
        <taxon>Gunneridae</taxon>
        <taxon>Pentapetalae</taxon>
        <taxon>rosids</taxon>
        <taxon>malvids</taxon>
        <taxon>Brassicales</taxon>
        <taxon>Brassicaceae</taxon>
        <taxon>Camelineae</taxon>
        <taxon>Arabidopsis</taxon>
    </lineage>
</organism>
<comment type="function">
    <text evidence="1 4 8">Involved in the endosomal multivesicular bodies (MVB) pathway. MVBs contain intraluminal vesicles (ILVs) that are generated by invagination and scission from the limiting membrane of the endosome and are delivered to lysosomes enabling degradation of membrane proteins (By similarity). Thought to be a cofactor of SKD1/VPS4, which catalyzes the disassembly of membrane-associated ESCRT-III (PubMed:17468262). Target of pathogen-responsive mitogen-activated protein kinases (MPKs) that plays a critical role in plant basal resistance to Pseudomonas syringae in a SKD1-dependent manner by promoting multivesicular bodies (MVBs) trafficking upon plant infection (PubMed:25010425).</text>
</comment>
<comment type="subunit">
    <text evidence="4 5 6 7 8">Homodimer (PubMed:20663085, PubMed:25010425). Interacts with SKD1/VPS4, VPS60-1, CHMP1A and CHMP1B (PubMed:17468262, PubMed:19304934, PubMed:20663085). Binds to PROS/At4g24370 (PubMed:24385429, PubMed:25010425). Interacts with MPK6 and MPK3 (PubMed:25010425).</text>
</comment>
<comment type="interaction">
    <interactant intactId="EBI-1606558">
        <id>Q9SZ15</id>
    </interactant>
    <interactant intactId="EBI-1606459">
        <id>Q9ZNT0</id>
        <label>SKD1</label>
    </interactant>
    <organismsDiffer>false</organismsDiffer>
    <experiments>2</experiments>
</comment>
<comment type="subcellular location">
    <subcellularLocation>
        <location evidence="8">Cytoplasm</location>
    </subcellularLocation>
    <subcellularLocation>
        <location evidence="2">Endosome membrane</location>
        <topology evidence="2">Peripheral membrane protein</topology>
    </subcellularLocation>
    <subcellularLocation>
        <location evidence="8">Nucleus</location>
    </subcellularLocation>
    <subcellularLocation>
        <location evidence="8">Endosome</location>
        <location evidence="8">Multivesicular body</location>
    </subcellularLocation>
    <text evidence="8">Localized in multivesicular body when associated with SKD1.</text>
</comment>
<comment type="induction">
    <text evidence="8">By Pseudomonas syringae pv. tomato strain DC3000 (PstDC3000).</text>
</comment>
<comment type="PTM">
    <text evidence="8">Phosphorylated by activated MPK6 and MPK3, this activation is required to trigger multivesicular bodies (MVBs) trafficking upon plant infection.</text>
</comment>
<comment type="disruption phenotype">
    <text evidence="4 8">No strong phenotypic alterations under normal growth conditions; slightly slow growth, slightly pale green and flat leaves, and reduced seed yields (PubMed:17468262, PubMed:25010425). Increased sensitivity to Pseudomonas syringae pv. tomato strain DC3000 (PstDC3000) (PubMed:25010425).</text>
</comment>
<comment type="similarity">
    <text evidence="11">Belongs to the VTA1 family.</text>
</comment>
<keyword id="KW-0007">Acetylation</keyword>
<keyword id="KW-0963">Cytoplasm</keyword>
<keyword id="KW-0967">Endosome</keyword>
<keyword id="KW-0472">Membrane</keyword>
<keyword id="KW-0539">Nucleus</keyword>
<keyword id="KW-0597">Phosphoprotein</keyword>
<keyword id="KW-0611">Plant defense</keyword>
<keyword id="KW-0653">Protein transport</keyword>
<keyword id="KW-1185">Reference proteome</keyword>
<keyword id="KW-0813">Transport</keyword>
<reference key="1">
    <citation type="journal article" date="1999" name="Nature">
        <title>Sequence and analysis of chromosome 4 of the plant Arabidopsis thaliana.</title>
        <authorList>
            <person name="Mayer K.F.X."/>
            <person name="Schueller C."/>
            <person name="Wambutt R."/>
            <person name="Murphy G."/>
            <person name="Volckaert G."/>
            <person name="Pohl T."/>
            <person name="Duesterhoeft A."/>
            <person name="Stiekema W."/>
            <person name="Entian K.-D."/>
            <person name="Terryn N."/>
            <person name="Harris B."/>
            <person name="Ansorge W."/>
            <person name="Brandt P."/>
            <person name="Grivell L.A."/>
            <person name="Rieger M."/>
            <person name="Weichselgartner M."/>
            <person name="de Simone V."/>
            <person name="Obermaier B."/>
            <person name="Mache R."/>
            <person name="Mueller M."/>
            <person name="Kreis M."/>
            <person name="Delseny M."/>
            <person name="Puigdomenech P."/>
            <person name="Watson M."/>
            <person name="Schmidtheini T."/>
            <person name="Reichert B."/>
            <person name="Portetelle D."/>
            <person name="Perez-Alonso M."/>
            <person name="Boutry M."/>
            <person name="Bancroft I."/>
            <person name="Vos P."/>
            <person name="Hoheisel J."/>
            <person name="Zimmermann W."/>
            <person name="Wedler H."/>
            <person name="Ridley P."/>
            <person name="Langham S.-A."/>
            <person name="McCullagh B."/>
            <person name="Bilham L."/>
            <person name="Robben J."/>
            <person name="van der Schueren J."/>
            <person name="Grymonprez B."/>
            <person name="Chuang Y.-J."/>
            <person name="Vandenbussche F."/>
            <person name="Braeken M."/>
            <person name="Weltjens I."/>
            <person name="Voet M."/>
            <person name="Bastiaens I."/>
            <person name="Aert R."/>
            <person name="Defoor E."/>
            <person name="Weitzenegger T."/>
            <person name="Bothe G."/>
            <person name="Ramsperger U."/>
            <person name="Hilbert H."/>
            <person name="Braun M."/>
            <person name="Holzer E."/>
            <person name="Brandt A."/>
            <person name="Peters S."/>
            <person name="van Staveren M."/>
            <person name="Dirkse W."/>
            <person name="Mooijman P."/>
            <person name="Klein Lankhorst R."/>
            <person name="Rose M."/>
            <person name="Hauf J."/>
            <person name="Koetter P."/>
            <person name="Berneiser S."/>
            <person name="Hempel S."/>
            <person name="Feldpausch M."/>
            <person name="Lamberth S."/>
            <person name="Van den Daele H."/>
            <person name="De Keyser A."/>
            <person name="Buysshaert C."/>
            <person name="Gielen J."/>
            <person name="Villarroel R."/>
            <person name="De Clercq R."/>
            <person name="van Montagu M."/>
            <person name="Rogers J."/>
            <person name="Cronin A."/>
            <person name="Quail M.A."/>
            <person name="Bray-Allen S."/>
            <person name="Clark L."/>
            <person name="Doggett J."/>
            <person name="Hall S."/>
            <person name="Kay M."/>
            <person name="Lennard N."/>
            <person name="McLay K."/>
            <person name="Mayes R."/>
            <person name="Pettett A."/>
            <person name="Rajandream M.A."/>
            <person name="Lyne M."/>
            <person name="Benes V."/>
            <person name="Rechmann S."/>
            <person name="Borkova D."/>
            <person name="Bloecker H."/>
            <person name="Scharfe M."/>
            <person name="Grimm M."/>
            <person name="Loehnert T.-H."/>
            <person name="Dose S."/>
            <person name="de Haan M."/>
            <person name="Maarse A.C."/>
            <person name="Schaefer M."/>
            <person name="Mueller-Auer S."/>
            <person name="Gabel C."/>
            <person name="Fuchs M."/>
            <person name="Fartmann B."/>
            <person name="Granderath K."/>
            <person name="Dauner D."/>
            <person name="Herzl A."/>
            <person name="Neumann S."/>
            <person name="Argiriou A."/>
            <person name="Vitale D."/>
            <person name="Liguori R."/>
            <person name="Piravandi E."/>
            <person name="Massenet O."/>
            <person name="Quigley F."/>
            <person name="Clabauld G."/>
            <person name="Muendlein A."/>
            <person name="Felber R."/>
            <person name="Schnabl S."/>
            <person name="Hiller R."/>
            <person name="Schmidt W."/>
            <person name="Lecharny A."/>
            <person name="Aubourg S."/>
            <person name="Chefdor F."/>
            <person name="Cooke R."/>
            <person name="Berger C."/>
            <person name="Monfort A."/>
            <person name="Casacuberta E."/>
            <person name="Gibbons T."/>
            <person name="Weber N."/>
            <person name="Vandenbol M."/>
            <person name="Bargues M."/>
            <person name="Terol J."/>
            <person name="Torres A."/>
            <person name="Perez-Perez A."/>
            <person name="Purnelle B."/>
            <person name="Bent E."/>
            <person name="Johnson S."/>
            <person name="Tacon D."/>
            <person name="Jesse T."/>
            <person name="Heijnen L."/>
            <person name="Schwarz S."/>
            <person name="Scholler P."/>
            <person name="Heber S."/>
            <person name="Francs P."/>
            <person name="Bielke C."/>
            <person name="Frishman D."/>
            <person name="Haase D."/>
            <person name="Lemcke K."/>
            <person name="Mewes H.-W."/>
            <person name="Stocker S."/>
            <person name="Zaccaria P."/>
            <person name="Bevan M."/>
            <person name="Wilson R.K."/>
            <person name="de la Bastide M."/>
            <person name="Habermann K."/>
            <person name="Parnell L."/>
            <person name="Dedhia N."/>
            <person name="Gnoj L."/>
            <person name="Schutz K."/>
            <person name="Huang E."/>
            <person name="Spiegel L."/>
            <person name="Sekhon M."/>
            <person name="Murray J."/>
            <person name="Sheet P."/>
            <person name="Cordes M."/>
            <person name="Abu-Threideh J."/>
            <person name="Stoneking T."/>
            <person name="Kalicki J."/>
            <person name="Graves T."/>
            <person name="Harmon G."/>
            <person name="Edwards J."/>
            <person name="Latreille P."/>
            <person name="Courtney L."/>
            <person name="Cloud J."/>
            <person name="Abbott A."/>
            <person name="Scott K."/>
            <person name="Johnson D."/>
            <person name="Minx P."/>
            <person name="Bentley D."/>
            <person name="Fulton B."/>
            <person name="Miller N."/>
            <person name="Greco T."/>
            <person name="Kemp K."/>
            <person name="Kramer J."/>
            <person name="Fulton L."/>
            <person name="Mardis E."/>
            <person name="Dante M."/>
            <person name="Pepin K."/>
            <person name="Hillier L.W."/>
            <person name="Nelson J."/>
            <person name="Spieth J."/>
            <person name="Ryan E."/>
            <person name="Andrews S."/>
            <person name="Geisel C."/>
            <person name="Layman D."/>
            <person name="Du H."/>
            <person name="Ali J."/>
            <person name="Berghoff A."/>
            <person name="Jones K."/>
            <person name="Drone K."/>
            <person name="Cotton M."/>
            <person name="Joshu C."/>
            <person name="Antonoiu B."/>
            <person name="Zidanic M."/>
            <person name="Strong C."/>
            <person name="Sun H."/>
            <person name="Lamar B."/>
            <person name="Yordan C."/>
            <person name="Ma P."/>
            <person name="Zhong J."/>
            <person name="Preston R."/>
            <person name="Vil D."/>
            <person name="Shekher M."/>
            <person name="Matero A."/>
            <person name="Shah R."/>
            <person name="Swaby I.K."/>
            <person name="O'Shaughnessy A."/>
            <person name="Rodriguez M."/>
            <person name="Hoffman J."/>
            <person name="Till S."/>
            <person name="Granat S."/>
            <person name="Shohdy N."/>
            <person name="Hasegawa A."/>
            <person name="Hameed A."/>
            <person name="Lodhi M."/>
            <person name="Johnson A."/>
            <person name="Chen E."/>
            <person name="Marra M.A."/>
            <person name="Martienssen R."/>
            <person name="McCombie W.R."/>
        </authorList>
    </citation>
    <scope>NUCLEOTIDE SEQUENCE [LARGE SCALE GENOMIC DNA]</scope>
    <source>
        <strain>cv. Columbia</strain>
    </source>
</reference>
<reference key="2">
    <citation type="journal article" date="2017" name="Plant J.">
        <title>Araport11: a complete reannotation of the Arabidopsis thaliana reference genome.</title>
        <authorList>
            <person name="Cheng C.Y."/>
            <person name="Krishnakumar V."/>
            <person name="Chan A.P."/>
            <person name="Thibaud-Nissen F."/>
            <person name="Schobel S."/>
            <person name="Town C.D."/>
        </authorList>
    </citation>
    <scope>GENOME REANNOTATION</scope>
    <source>
        <strain>cv. Columbia</strain>
    </source>
</reference>
<reference key="3">
    <citation type="journal article" date="2003" name="Science">
        <title>Empirical analysis of transcriptional activity in the Arabidopsis genome.</title>
        <authorList>
            <person name="Yamada K."/>
            <person name="Lim J."/>
            <person name="Dale J.M."/>
            <person name="Chen H."/>
            <person name="Shinn P."/>
            <person name="Palm C.J."/>
            <person name="Southwick A.M."/>
            <person name="Wu H.C."/>
            <person name="Kim C.J."/>
            <person name="Nguyen M."/>
            <person name="Pham P.K."/>
            <person name="Cheuk R.F."/>
            <person name="Karlin-Newmann G."/>
            <person name="Liu S.X."/>
            <person name="Lam B."/>
            <person name="Sakano H."/>
            <person name="Wu T."/>
            <person name="Yu G."/>
            <person name="Miranda M."/>
            <person name="Quach H.L."/>
            <person name="Tripp M."/>
            <person name="Chang C.H."/>
            <person name="Lee J.M."/>
            <person name="Toriumi M.J."/>
            <person name="Chan M.M."/>
            <person name="Tang C.C."/>
            <person name="Onodera C.S."/>
            <person name="Deng J.M."/>
            <person name="Akiyama K."/>
            <person name="Ansari Y."/>
            <person name="Arakawa T."/>
            <person name="Banh J."/>
            <person name="Banno F."/>
            <person name="Bowser L."/>
            <person name="Brooks S.Y."/>
            <person name="Carninci P."/>
            <person name="Chao Q."/>
            <person name="Choy N."/>
            <person name="Enju A."/>
            <person name="Goldsmith A.D."/>
            <person name="Gurjal M."/>
            <person name="Hansen N.F."/>
            <person name="Hayashizaki Y."/>
            <person name="Johnson-Hopson C."/>
            <person name="Hsuan V.W."/>
            <person name="Iida K."/>
            <person name="Karnes M."/>
            <person name="Khan S."/>
            <person name="Koesema E."/>
            <person name="Ishida J."/>
            <person name="Jiang P.X."/>
            <person name="Jones T."/>
            <person name="Kawai J."/>
            <person name="Kamiya A."/>
            <person name="Meyers C."/>
            <person name="Nakajima M."/>
            <person name="Narusaka M."/>
            <person name="Seki M."/>
            <person name="Sakurai T."/>
            <person name="Satou M."/>
            <person name="Tamse R."/>
            <person name="Vaysberg M."/>
            <person name="Wallender E.K."/>
            <person name="Wong C."/>
            <person name="Yamamura Y."/>
            <person name="Yuan S."/>
            <person name="Shinozaki K."/>
            <person name="Davis R.W."/>
            <person name="Theologis A."/>
            <person name="Ecker J.R."/>
        </authorList>
    </citation>
    <scope>NUCLEOTIDE SEQUENCE [LARGE SCALE MRNA]</scope>
    <source>
        <strain>cv. Columbia</strain>
    </source>
</reference>
<reference key="4">
    <citation type="journal article" date="2007" name="Plant Cell">
        <title>The Arabidopsis AAA ATPase SKD1 is involved in multivesicular endosome function and interacts with its positive regulator LYST-INTERACTING PROTEIN5.</title>
        <authorList>
            <person name="Haas T.J."/>
            <person name="Sliwinski M.K."/>
            <person name="Martinez D.E."/>
            <person name="Preuss M."/>
            <person name="Ebine K."/>
            <person name="Ueda T."/>
            <person name="Nielsen E."/>
            <person name="Odorizzi G."/>
            <person name="Otegui M.S."/>
        </authorList>
    </citation>
    <scope>FUNCTION</scope>
    <scope>DISRUPTION PHENOTYPE</scope>
    <scope>INTERACTION WITH SKD1/VPS4</scope>
    <source>
        <strain>cv. Columbia</strain>
    </source>
</reference>
<reference key="5">
    <citation type="journal article" date="2009" name="Plant Cell">
        <title>The ESCRT-related CHMP1A and B proteins mediate multivesicular body sorting of auxin carriers in Arabidopsis and are required for plant development.</title>
        <authorList>
            <person name="Spitzer C."/>
            <person name="Reyes F.C."/>
            <person name="Buono R."/>
            <person name="Sliwinski M.K."/>
            <person name="Haas T.J."/>
            <person name="Otegui M.S."/>
        </authorList>
    </citation>
    <scope>INTERACTION WITH CHMP1A</scope>
</reference>
<reference key="6">
    <citation type="journal article" date="2010" name="Plant J.">
        <title>The AAA-type ATPase AtSKD1 contributes to vacuolar maintenance of Arabidopsis thaliana.</title>
        <authorList>
            <person name="Shahriari M."/>
            <person name="Keshavaiah C."/>
            <person name="Scheuring D."/>
            <person name="Sabovljevic A."/>
            <person name="Pimpl P."/>
            <person name="Haeusler R.E."/>
            <person name="Huelskamp M."/>
            <person name="Schellmann S."/>
        </authorList>
    </citation>
    <scope>HOMODIMER</scope>
    <scope>INTERACTION WITH SKD1; CHMP1A; CHMP1B AND VPS60-1</scope>
    <source>
        <strain>cv. Columbia</strain>
    </source>
</reference>
<reference key="7">
    <citation type="journal article" date="2012" name="Mol. Cell. Proteomics">
        <title>Comparative large-scale characterisation of plant vs. mammal proteins reveals similar and idiosyncratic N-alpha acetylation features.</title>
        <authorList>
            <person name="Bienvenut W.V."/>
            <person name="Sumpton D."/>
            <person name="Martinez A."/>
            <person name="Lilla S."/>
            <person name="Espagne C."/>
            <person name="Meinnel T."/>
            <person name="Giglione C."/>
        </authorList>
    </citation>
    <scope>ACETYLATION [LARGE SCALE ANALYSIS] AT SER-2</scope>
    <scope>CLEAVAGE OF INITIATOR METHIONINE [LARGE SCALE ANALYSIS]</scope>
    <scope>IDENTIFICATION BY MASS SPECTROMETRY [LARGE SCALE ANALYSIS]</scope>
</reference>
<reference key="8">
    <citation type="journal article" date="2014" name="J. Biol. Chem.">
        <title>A novel endosomal sorting complex required for transport (ESCRT) component in Arabidopsis thaliana controls cell expansion and development.</title>
        <authorList>
            <person name="Reyes F.C."/>
            <person name="Buono R.A."/>
            <person name="Roschzttardtz H."/>
            <person name="Di Rubbo S."/>
            <person name="Yeun L.H."/>
            <person name="Russinova E."/>
            <person name="Otegui M.S."/>
        </authorList>
    </citation>
    <scope>INTERACTION WITH PROS/AT4G24370</scope>
</reference>
<reference key="9">
    <citation type="journal article" date="2014" name="PLoS Pathog.">
        <title>Arabidopsis LIP5, a positive regulator of multivesicular body biogenesis, is a critical target of pathogen-responsive MAPK cascade in plant basal defense.</title>
        <authorList>
            <person name="Wang F."/>
            <person name="Shang Y."/>
            <person name="Fan B."/>
            <person name="Yu J.-Q."/>
            <person name="Chen Z."/>
        </authorList>
    </citation>
    <scope>FUNCTION</scope>
    <scope>DISRUPTION PHENOTYPE</scope>
    <scope>MUTAGENESIS OF SER-73; THR-153; SER-254; SER-285; SER-307; SER-323; PHE-388 AND PHE-395</scope>
    <scope>INTERACTION WITH SKD1; MPK6 AND MPK3</scope>
    <scope>HOMODIMERIZATION</scope>
    <scope>PHOSPHORYLATION BY MPK6 AND MPK3</scope>
    <scope>INDUCTION BY PSEUDOMONAS SYRINGAE</scope>
    <scope>SUBCELLULAR LOCATION</scope>
    <source>
        <strain>cv. Columbia</strain>
    </source>
</reference>
<name>LIP5_ARATH</name>